<reference key="1">
    <citation type="journal article" date="2002" name="Proc. Natl. Acad. Sci. U.S.A.">
        <title>The Brucella suis genome reveals fundamental similarities between animal and plant pathogens and symbionts.</title>
        <authorList>
            <person name="Paulsen I.T."/>
            <person name="Seshadri R."/>
            <person name="Nelson K.E."/>
            <person name="Eisen J.A."/>
            <person name="Heidelberg J.F."/>
            <person name="Read T.D."/>
            <person name="Dodson R.J."/>
            <person name="Umayam L.A."/>
            <person name="Brinkac L.M."/>
            <person name="Beanan M.J."/>
            <person name="Daugherty S.C."/>
            <person name="DeBoy R.T."/>
            <person name="Durkin A.S."/>
            <person name="Kolonay J.F."/>
            <person name="Madupu R."/>
            <person name="Nelson W.C."/>
            <person name="Ayodeji B."/>
            <person name="Kraul M."/>
            <person name="Shetty J."/>
            <person name="Malek J.A."/>
            <person name="Van Aken S.E."/>
            <person name="Riedmuller S."/>
            <person name="Tettelin H."/>
            <person name="Gill S.R."/>
            <person name="White O."/>
            <person name="Salzberg S.L."/>
            <person name="Hoover D.L."/>
            <person name="Lindler L.E."/>
            <person name="Halling S.M."/>
            <person name="Boyle S.M."/>
            <person name="Fraser C.M."/>
        </authorList>
    </citation>
    <scope>NUCLEOTIDE SEQUENCE [LARGE SCALE GENOMIC DNA]</scope>
    <source>
        <strain>1330</strain>
    </source>
</reference>
<reference key="2">
    <citation type="journal article" date="2011" name="J. Bacteriol.">
        <title>Revised genome sequence of Brucella suis 1330.</title>
        <authorList>
            <person name="Tae H."/>
            <person name="Shallom S."/>
            <person name="Settlage R."/>
            <person name="Preston D."/>
            <person name="Adams L.G."/>
            <person name="Garner H.R."/>
        </authorList>
    </citation>
    <scope>NUCLEOTIDE SEQUENCE [LARGE SCALE GENOMIC DNA]</scope>
    <source>
        <strain>1330</strain>
    </source>
</reference>
<name>Y3408_BRUSU</name>
<protein>
    <recommendedName>
        <fullName>Putative peptide permease protein BRA0408/BS1330_II0405</fullName>
    </recommendedName>
</protein>
<accession>Q8FWN8</accession>
<accession>G0KCE6</accession>
<dbReference type="EMBL" id="AE014292">
    <property type="protein sequence ID" value="AAN33605.1"/>
    <property type="molecule type" value="Genomic_DNA"/>
</dbReference>
<dbReference type="EMBL" id="CP002998">
    <property type="protein sequence ID" value="AEM19884.1"/>
    <property type="molecule type" value="Genomic_DNA"/>
</dbReference>
<dbReference type="RefSeq" id="WP_006191856.1">
    <property type="nucleotide sequence ID" value="NZ_KN046805.1"/>
</dbReference>
<dbReference type="SMR" id="Q8FWN8"/>
<dbReference type="GeneID" id="45053461"/>
<dbReference type="KEGG" id="bms:BRA0408"/>
<dbReference type="KEGG" id="bsi:BS1330_II0405"/>
<dbReference type="PATRIC" id="fig|204722.21.peg.88"/>
<dbReference type="HOGENOM" id="CLU_036879_1_2_5"/>
<dbReference type="PhylomeDB" id="Q8FWN8"/>
<dbReference type="Proteomes" id="UP000007104">
    <property type="component" value="Chromosome II"/>
</dbReference>
<dbReference type="GO" id="GO:0005886">
    <property type="term" value="C:plasma membrane"/>
    <property type="evidence" value="ECO:0007669"/>
    <property type="project" value="UniProtKB-SubCell"/>
</dbReference>
<dbReference type="GO" id="GO:0015833">
    <property type="term" value="P:peptide transport"/>
    <property type="evidence" value="ECO:0007669"/>
    <property type="project" value="UniProtKB-KW"/>
</dbReference>
<dbReference type="GO" id="GO:0015031">
    <property type="term" value="P:protein transport"/>
    <property type="evidence" value="ECO:0007669"/>
    <property type="project" value="UniProtKB-KW"/>
</dbReference>
<dbReference type="GO" id="GO:0055085">
    <property type="term" value="P:transmembrane transport"/>
    <property type="evidence" value="ECO:0007669"/>
    <property type="project" value="InterPro"/>
</dbReference>
<dbReference type="CDD" id="cd06261">
    <property type="entry name" value="TM_PBP2"/>
    <property type="match status" value="1"/>
</dbReference>
<dbReference type="Gene3D" id="1.10.3720.10">
    <property type="entry name" value="MetI-like"/>
    <property type="match status" value="1"/>
</dbReference>
<dbReference type="InterPro" id="IPR045621">
    <property type="entry name" value="BPD_transp_1_N"/>
</dbReference>
<dbReference type="InterPro" id="IPR000515">
    <property type="entry name" value="MetI-like"/>
</dbReference>
<dbReference type="InterPro" id="IPR035906">
    <property type="entry name" value="MetI-like_sf"/>
</dbReference>
<dbReference type="PANTHER" id="PTHR43163">
    <property type="entry name" value="DIPEPTIDE TRANSPORT SYSTEM PERMEASE PROTEIN DPPB-RELATED"/>
    <property type="match status" value="1"/>
</dbReference>
<dbReference type="PANTHER" id="PTHR43163:SF6">
    <property type="entry name" value="DIPEPTIDE TRANSPORT SYSTEM PERMEASE PROTEIN DPPB-RELATED"/>
    <property type="match status" value="1"/>
</dbReference>
<dbReference type="Pfam" id="PF00528">
    <property type="entry name" value="BPD_transp_1"/>
    <property type="match status" value="1"/>
</dbReference>
<dbReference type="Pfam" id="PF19300">
    <property type="entry name" value="BPD_transp_1_N"/>
    <property type="match status" value="1"/>
</dbReference>
<dbReference type="SUPFAM" id="SSF161098">
    <property type="entry name" value="MetI-like"/>
    <property type="match status" value="1"/>
</dbReference>
<dbReference type="PROSITE" id="PS50928">
    <property type="entry name" value="ABC_TM1"/>
    <property type="match status" value="1"/>
</dbReference>
<proteinExistence type="inferred from homology"/>
<feature type="chain" id="PRO_0000328715" description="Putative peptide permease protein BRA0408/BS1330_II0405">
    <location>
        <begin position="1"/>
        <end position="319"/>
    </location>
</feature>
<feature type="transmembrane region" description="Helical" evidence="2">
    <location>
        <begin position="9"/>
        <end position="29"/>
    </location>
</feature>
<feature type="transmembrane region" description="Helical" evidence="2">
    <location>
        <begin position="102"/>
        <end position="122"/>
    </location>
</feature>
<feature type="transmembrane region" description="Helical" evidence="2">
    <location>
        <begin position="138"/>
        <end position="158"/>
    </location>
</feature>
<feature type="transmembrane region" description="Helical" evidence="2">
    <location>
        <begin position="182"/>
        <end position="202"/>
    </location>
</feature>
<feature type="transmembrane region" description="Helical" evidence="2">
    <location>
        <begin position="242"/>
        <end position="262"/>
    </location>
</feature>
<feature type="transmembrane region" description="Helical" evidence="2">
    <location>
        <begin position="284"/>
        <end position="304"/>
    </location>
</feature>
<feature type="domain" description="ABC transmembrane type-1" evidence="2">
    <location>
        <begin position="98"/>
        <end position="305"/>
    </location>
</feature>
<organism>
    <name type="scientific">Brucella suis biovar 1 (strain 1330)</name>
    <dbReference type="NCBI Taxonomy" id="204722"/>
    <lineage>
        <taxon>Bacteria</taxon>
        <taxon>Pseudomonadati</taxon>
        <taxon>Pseudomonadota</taxon>
        <taxon>Alphaproteobacteria</taxon>
        <taxon>Hyphomicrobiales</taxon>
        <taxon>Brucellaceae</taxon>
        <taxon>Brucella/Ochrobactrum group</taxon>
        <taxon>Brucella</taxon>
    </lineage>
</organism>
<evidence type="ECO:0000250" key="1"/>
<evidence type="ECO:0000255" key="2">
    <source>
        <dbReference type="PROSITE-ProRule" id="PRU00441"/>
    </source>
</evidence>
<evidence type="ECO:0000305" key="3"/>
<gene>
    <name type="ordered locus">BRA0408</name>
    <name type="ordered locus">BS1330_II0405</name>
</gene>
<sequence length="319" mass="34442">MLRYCLHRLLIGLGMLLALTILIFVLLQLTPGDPIDAYINPNVAMTQAEMDALRAQLGLDRPLPVQYLAWLGQAVQGNLGHSLQRFNETVSGLIASRIGPTLLLMAAGLAIAIVIGVTTGIISAVRRNSFLDYSFSVLALLGISSPAFLTALLGLYVFSVRLKWAPSGGMLTPATDFSIPDLLRHLALPALVLSIGHAALIMRYMRSSMLETLNQDYVRTARAKGVREFWVVVKHTLRNAMLPVVTLIGSTIGLAVGGAIFIESVFNWPGMGLLLINAVETRDYPVIMGATLVIGACVIIVNILTDLAYAVIDPRIKVT</sequence>
<keyword id="KW-0997">Cell inner membrane</keyword>
<keyword id="KW-1003">Cell membrane</keyword>
<keyword id="KW-0472">Membrane</keyword>
<keyword id="KW-0571">Peptide transport</keyword>
<keyword id="KW-0653">Protein transport</keyword>
<keyword id="KW-0812">Transmembrane</keyword>
<keyword id="KW-1133">Transmembrane helix</keyword>
<keyword id="KW-0813">Transport</keyword>
<comment type="function">
    <text evidence="1">Probably part of an ABC transporter complex that could be involved in peptide import. Probably responsible for the translocation of the substrate across the membrane (By similarity).</text>
</comment>
<comment type="subunit">
    <text evidence="3">The complex is composed of two ATP-binding proteins (BRA0404 and BRA0405), two transmembrane proteins (BRA0407 and BRA0408) and a solute-binding protein (BRA0409).</text>
</comment>
<comment type="subcellular location">
    <subcellularLocation>
        <location evidence="3">Cell inner membrane</location>
        <topology evidence="2">Multi-pass membrane protein</topology>
    </subcellularLocation>
</comment>
<comment type="similarity">
    <text evidence="3">Belongs to the binding-protein-dependent transport system permease family.</text>
</comment>